<proteinExistence type="inferred from homology"/>
<dbReference type="EC" id="7.1.1.-" evidence="1"/>
<dbReference type="EMBL" id="AP009366">
    <property type="protein sequence ID" value="BAF49774.1"/>
    <property type="molecule type" value="Genomic_DNA"/>
</dbReference>
<dbReference type="RefSeq" id="YP_001122950.1">
    <property type="nucleotide sequence ID" value="NC_009265.1"/>
</dbReference>
<dbReference type="SMR" id="A4QJB9"/>
<dbReference type="GeneID" id="4968587"/>
<dbReference type="GO" id="GO:0009535">
    <property type="term" value="C:chloroplast thylakoid membrane"/>
    <property type="evidence" value="ECO:0007669"/>
    <property type="project" value="UniProtKB-SubCell"/>
</dbReference>
<dbReference type="GO" id="GO:0045271">
    <property type="term" value="C:respiratory chain complex I"/>
    <property type="evidence" value="ECO:0007669"/>
    <property type="project" value="TreeGrafter"/>
</dbReference>
<dbReference type="GO" id="GO:0051539">
    <property type="term" value="F:4 iron, 4 sulfur cluster binding"/>
    <property type="evidence" value="ECO:0007669"/>
    <property type="project" value="UniProtKB-KW"/>
</dbReference>
<dbReference type="GO" id="GO:0005506">
    <property type="term" value="F:iron ion binding"/>
    <property type="evidence" value="ECO:0007669"/>
    <property type="project" value="UniProtKB-UniRule"/>
</dbReference>
<dbReference type="GO" id="GO:0008137">
    <property type="term" value="F:NADH dehydrogenase (ubiquinone) activity"/>
    <property type="evidence" value="ECO:0007669"/>
    <property type="project" value="InterPro"/>
</dbReference>
<dbReference type="GO" id="GO:0048038">
    <property type="term" value="F:quinone binding"/>
    <property type="evidence" value="ECO:0007669"/>
    <property type="project" value="UniProtKB-KW"/>
</dbReference>
<dbReference type="GO" id="GO:0009060">
    <property type="term" value="P:aerobic respiration"/>
    <property type="evidence" value="ECO:0007669"/>
    <property type="project" value="TreeGrafter"/>
</dbReference>
<dbReference type="GO" id="GO:0015990">
    <property type="term" value="P:electron transport coupled proton transport"/>
    <property type="evidence" value="ECO:0007669"/>
    <property type="project" value="TreeGrafter"/>
</dbReference>
<dbReference type="GO" id="GO:0019684">
    <property type="term" value="P:photosynthesis, light reaction"/>
    <property type="evidence" value="ECO:0007669"/>
    <property type="project" value="UniProtKB-UniRule"/>
</dbReference>
<dbReference type="FunFam" id="3.40.50.12280:FF:000003">
    <property type="entry name" value="NAD(P)H-quinone oxidoreductase subunit K, chloroplastic"/>
    <property type="match status" value="1"/>
</dbReference>
<dbReference type="Gene3D" id="3.40.50.12280">
    <property type="match status" value="1"/>
</dbReference>
<dbReference type="HAMAP" id="MF_01356">
    <property type="entry name" value="NDH1_NuoB"/>
    <property type="match status" value="1"/>
</dbReference>
<dbReference type="InterPro" id="IPR006137">
    <property type="entry name" value="NADH_UbQ_OxRdtase-like_20kDa"/>
</dbReference>
<dbReference type="InterPro" id="IPR006138">
    <property type="entry name" value="NADH_UQ_OxRdtase_20Kd_su"/>
</dbReference>
<dbReference type="NCBIfam" id="TIGR01957">
    <property type="entry name" value="nuoB_fam"/>
    <property type="match status" value="1"/>
</dbReference>
<dbReference type="NCBIfam" id="NF005012">
    <property type="entry name" value="PRK06411.1"/>
    <property type="match status" value="1"/>
</dbReference>
<dbReference type="PANTHER" id="PTHR11995">
    <property type="entry name" value="NADH DEHYDROGENASE"/>
    <property type="match status" value="1"/>
</dbReference>
<dbReference type="PANTHER" id="PTHR11995:SF14">
    <property type="entry name" value="NADH DEHYDROGENASE [UBIQUINONE] IRON-SULFUR PROTEIN 7, MITOCHONDRIAL"/>
    <property type="match status" value="1"/>
</dbReference>
<dbReference type="Pfam" id="PF01058">
    <property type="entry name" value="Oxidored_q6"/>
    <property type="match status" value="1"/>
</dbReference>
<dbReference type="SUPFAM" id="SSF56770">
    <property type="entry name" value="HydA/Nqo6-like"/>
    <property type="match status" value="1"/>
</dbReference>
<dbReference type="PROSITE" id="PS01150">
    <property type="entry name" value="COMPLEX1_20K"/>
    <property type="match status" value="1"/>
</dbReference>
<geneLocation type="chloroplast"/>
<organism>
    <name type="scientific">Aethionema cordifolium</name>
    <name type="common">Lebanon stonecress</name>
    <dbReference type="NCBI Taxonomy" id="434059"/>
    <lineage>
        <taxon>Eukaryota</taxon>
        <taxon>Viridiplantae</taxon>
        <taxon>Streptophyta</taxon>
        <taxon>Embryophyta</taxon>
        <taxon>Tracheophyta</taxon>
        <taxon>Spermatophyta</taxon>
        <taxon>Magnoliopsida</taxon>
        <taxon>eudicotyledons</taxon>
        <taxon>Gunneridae</taxon>
        <taxon>Pentapetalae</taxon>
        <taxon>rosids</taxon>
        <taxon>malvids</taxon>
        <taxon>Brassicales</taxon>
        <taxon>Brassicaceae</taxon>
        <taxon>Aethionemeae</taxon>
        <taxon>Aethionema</taxon>
    </lineage>
</organism>
<accession>A4QJB9</accession>
<feature type="chain" id="PRO_0000358515" description="NAD(P)H-quinone oxidoreductase subunit K, chloroplastic">
    <location>
        <begin position="1"/>
        <end position="229"/>
    </location>
</feature>
<feature type="binding site" evidence="1">
    <location>
        <position position="43"/>
    </location>
    <ligand>
        <name>[4Fe-4S] cluster</name>
        <dbReference type="ChEBI" id="CHEBI:49883"/>
    </ligand>
</feature>
<feature type="binding site" evidence="1">
    <location>
        <position position="44"/>
    </location>
    <ligand>
        <name>[4Fe-4S] cluster</name>
        <dbReference type="ChEBI" id="CHEBI:49883"/>
    </ligand>
</feature>
<feature type="binding site" evidence="1">
    <location>
        <position position="108"/>
    </location>
    <ligand>
        <name>[4Fe-4S] cluster</name>
        <dbReference type="ChEBI" id="CHEBI:49883"/>
    </ligand>
</feature>
<feature type="binding site" evidence="1">
    <location>
        <position position="139"/>
    </location>
    <ligand>
        <name>[4Fe-4S] cluster</name>
        <dbReference type="ChEBI" id="CHEBI:49883"/>
    </ligand>
</feature>
<protein>
    <recommendedName>
        <fullName evidence="1">NAD(P)H-quinone oxidoreductase subunit K, chloroplastic</fullName>
        <ecNumber evidence="1">7.1.1.-</ecNumber>
    </recommendedName>
    <alternativeName>
        <fullName evidence="1">NAD(P)H dehydrogenase subunit K</fullName>
    </alternativeName>
    <alternativeName>
        <fullName evidence="1">NADH-plastoquinone oxidoreductase subunit K</fullName>
    </alternativeName>
</protein>
<comment type="function">
    <text evidence="1">NDH shuttles electrons from NAD(P)H:plastoquinone, via FMN and iron-sulfur (Fe-S) centers, to quinones in the photosynthetic chain and possibly in a chloroplast respiratory chain. The immediate electron acceptor for the enzyme in this species is believed to be plastoquinone. Couples the redox reaction to proton translocation, and thus conserves the redox energy in a proton gradient.</text>
</comment>
<comment type="catalytic activity">
    <reaction evidence="1">
        <text>a plastoquinone + NADH + (n+1) H(+)(in) = a plastoquinol + NAD(+) + n H(+)(out)</text>
        <dbReference type="Rhea" id="RHEA:42608"/>
        <dbReference type="Rhea" id="RHEA-COMP:9561"/>
        <dbReference type="Rhea" id="RHEA-COMP:9562"/>
        <dbReference type="ChEBI" id="CHEBI:15378"/>
        <dbReference type="ChEBI" id="CHEBI:17757"/>
        <dbReference type="ChEBI" id="CHEBI:57540"/>
        <dbReference type="ChEBI" id="CHEBI:57945"/>
        <dbReference type="ChEBI" id="CHEBI:62192"/>
    </reaction>
</comment>
<comment type="catalytic activity">
    <reaction evidence="1">
        <text>a plastoquinone + NADPH + (n+1) H(+)(in) = a plastoquinol + NADP(+) + n H(+)(out)</text>
        <dbReference type="Rhea" id="RHEA:42612"/>
        <dbReference type="Rhea" id="RHEA-COMP:9561"/>
        <dbReference type="Rhea" id="RHEA-COMP:9562"/>
        <dbReference type="ChEBI" id="CHEBI:15378"/>
        <dbReference type="ChEBI" id="CHEBI:17757"/>
        <dbReference type="ChEBI" id="CHEBI:57783"/>
        <dbReference type="ChEBI" id="CHEBI:58349"/>
        <dbReference type="ChEBI" id="CHEBI:62192"/>
    </reaction>
</comment>
<comment type="cofactor">
    <cofactor evidence="1">
        <name>[4Fe-4S] cluster</name>
        <dbReference type="ChEBI" id="CHEBI:49883"/>
    </cofactor>
    <text evidence="1">Binds 1 [4Fe-4S] cluster.</text>
</comment>
<comment type="subunit">
    <text evidence="1">NDH is composed of at least 16 different subunits, 5 of which are encoded in the nucleus.</text>
</comment>
<comment type="subcellular location">
    <subcellularLocation>
        <location evidence="1">Plastid</location>
        <location evidence="1">Chloroplast thylakoid membrane</location>
        <topology evidence="1">Peripheral membrane protein</topology>
        <orientation evidence="1">Stromal side</orientation>
    </subcellularLocation>
</comment>
<comment type="similarity">
    <text evidence="1">Belongs to the complex I 20 kDa subunit family.</text>
</comment>
<evidence type="ECO:0000255" key="1">
    <source>
        <dbReference type="HAMAP-Rule" id="MF_01356"/>
    </source>
</evidence>
<gene>
    <name evidence="1" type="primary">ndhK</name>
</gene>
<keyword id="KW-0004">4Fe-4S</keyword>
<keyword id="KW-0150">Chloroplast</keyword>
<keyword id="KW-0408">Iron</keyword>
<keyword id="KW-0411">Iron-sulfur</keyword>
<keyword id="KW-0472">Membrane</keyword>
<keyword id="KW-0479">Metal-binding</keyword>
<keyword id="KW-0520">NAD</keyword>
<keyword id="KW-0521">NADP</keyword>
<keyword id="KW-0934">Plastid</keyword>
<keyword id="KW-0618">Plastoquinone</keyword>
<keyword id="KW-0874">Quinone</keyword>
<keyword id="KW-0793">Thylakoid</keyword>
<keyword id="KW-1278">Translocase</keyword>
<keyword id="KW-0813">Transport</keyword>
<name>NDHK_AETCO</name>
<reference key="1">
    <citation type="submission" date="2007-03" db="EMBL/GenBank/DDBJ databases">
        <title>Sequencing analysis of Aethionema coridifolium chloroplast DNA.</title>
        <authorList>
            <person name="Hosouchi T."/>
            <person name="Tsuruoka H."/>
            <person name="Kotani H."/>
        </authorList>
    </citation>
    <scope>NUCLEOTIDE SEQUENCE [LARGE SCALE GENOMIC DNA]</scope>
</reference>
<sequence length="229" mass="25580">MNSIKFPVLDRTTKNSVISTTLNDLSNWSRLSSLWPLLYGTSCCFIEFASLIGSRFDFDRYGLVPRSSPRQADLILTAGTVTMKMAPSLVRLYEQMPEPKYVIAMGACTITGGMFSTDSYSTVRGVDKLIPVDVYLPGCPPKPEAVIDAITKLRKKIAREIYKDKIRPQQGNRCFTTNHKFFIVRSTDTGNSDQELLYPPSSTSEISTETFFKYKSPVSSHELVNSGGF</sequence>